<sequence length="561" mass="65520">MDSIFSVFKLFSEQFKASNIQEQATSDTKPESSPDINLGCSPNIKPECSPNIKSSIDVVEDIYPSTQLATQSLVIFSQEIKQIGSPNSPGTHDVSLNLKRKSDKISEDTDQERVVVCESLENKSSSKDKSPSRGRSPKRHKSSKKHKSSKKHKSSKHDKSSKRDKSSKRHKSHKKKDKSHKKRYRSPSSDRSLSRDRSSSRDRSYKKRRLYSRDRSLSRDRSLSRDRSLSRDRSPPRDRSLSRDRSPPRNRSFSRYRSPLRDRSPTRDRSVSRDGLTPESTPFLRSVSPVRRRFNFGKVLENHLPRENLPLTSKFGDGRIYRNKFVNNIYSVVLDDGTKIWYRGEKIIHDYNPTDNTYYIIMDDGAKIWYKGNLVHRDELPAIICANGTKKWYQYNQYDRENDLPSIVGNDGTLVWYINGKISRLNDKPAHITPNGTQKWYKDGKYHRDNDMPAIVEPYVVYKWYQYGLKHRDNDLPAIINVNGDLCWYQHDKLHREEGPAVICKNGKLIWYRHGEKIRQTTASTRGKNEYEYGDIISELYDRFPYILTWNSWNLRNQQNN</sequence>
<keyword id="KW-1185">Reference proteome</keyword>
<gene>
    <name type="ordered locus">MIMI_R871</name>
</gene>
<accession>Q5UP41</accession>
<proteinExistence type="inferred from homology"/>
<name>YR871_MIMIV</name>
<dbReference type="EMBL" id="AY653733">
    <property type="protein sequence ID" value="AAV51129.1"/>
    <property type="molecule type" value="Genomic_DNA"/>
</dbReference>
<dbReference type="KEGG" id="vg:9925537"/>
<dbReference type="OrthoDB" id="20334at10239"/>
<dbReference type="Proteomes" id="UP000001134">
    <property type="component" value="Genome"/>
</dbReference>
<protein>
    <recommendedName>
        <fullName>Uncharacterized protein R871</fullName>
    </recommendedName>
</protein>
<reference key="1">
    <citation type="journal article" date="2004" name="Science">
        <title>The 1.2-megabase genome sequence of Mimivirus.</title>
        <authorList>
            <person name="Raoult D."/>
            <person name="Audic S."/>
            <person name="Robert C."/>
            <person name="Abergel C."/>
            <person name="Renesto P."/>
            <person name="Ogata H."/>
            <person name="La Scola B."/>
            <person name="Susan M."/>
            <person name="Claverie J.-M."/>
        </authorList>
    </citation>
    <scope>NUCLEOTIDE SEQUENCE [LARGE SCALE GENOMIC DNA]</scope>
    <source>
        <strain>Rowbotham-Bradford</strain>
    </source>
</reference>
<feature type="chain" id="PRO_0000071382" description="Uncharacterized protein R871">
    <location>
        <begin position="1"/>
        <end position="561"/>
    </location>
</feature>
<feature type="region of interest" description="Disordered" evidence="1">
    <location>
        <begin position="20"/>
        <end position="42"/>
    </location>
</feature>
<feature type="region of interest" description="Disordered" evidence="1">
    <location>
        <begin position="82"/>
        <end position="283"/>
    </location>
</feature>
<feature type="compositionally biased region" description="Basic and acidic residues" evidence="1">
    <location>
        <begin position="103"/>
        <end position="131"/>
    </location>
</feature>
<feature type="compositionally biased region" description="Basic residues" evidence="1">
    <location>
        <begin position="135"/>
        <end position="156"/>
    </location>
</feature>
<feature type="compositionally biased region" description="Basic residues" evidence="1">
    <location>
        <begin position="165"/>
        <end position="185"/>
    </location>
</feature>
<feature type="compositionally biased region" description="Basic and acidic residues" evidence="1">
    <location>
        <begin position="192"/>
        <end position="203"/>
    </location>
</feature>
<feature type="compositionally biased region" description="Basic and acidic residues" evidence="1">
    <location>
        <begin position="211"/>
        <end position="247"/>
    </location>
</feature>
<feature type="compositionally biased region" description="Basic and acidic residues" evidence="1">
    <location>
        <begin position="259"/>
        <end position="272"/>
    </location>
</feature>
<organismHost>
    <name type="scientific">Acanthamoeba polyphaga</name>
    <name type="common">Amoeba</name>
    <dbReference type="NCBI Taxonomy" id="5757"/>
</organismHost>
<evidence type="ECO:0000256" key="1">
    <source>
        <dbReference type="SAM" id="MobiDB-lite"/>
    </source>
</evidence>
<evidence type="ECO:0000305" key="2"/>
<comment type="similarity">
    <text evidence="2">Belongs to the mimivirus L41 family.</text>
</comment>
<organism>
    <name type="scientific">Acanthamoeba polyphaga mimivirus</name>
    <name type="common">APMV</name>
    <dbReference type="NCBI Taxonomy" id="212035"/>
    <lineage>
        <taxon>Viruses</taxon>
        <taxon>Varidnaviria</taxon>
        <taxon>Bamfordvirae</taxon>
        <taxon>Nucleocytoviricota</taxon>
        <taxon>Megaviricetes</taxon>
        <taxon>Imitervirales</taxon>
        <taxon>Mimiviridae</taxon>
        <taxon>Megamimivirinae</taxon>
        <taxon>Mimivirus</taxon>
        <taxon>Mimivirus bradfordmassiliense</taxon>
    </lineage>
</organism>